<protein>
    <recommendedName>
        <fullName evidence="1">UPF0182 protein sll1060</fullName>
    </recommendedName>
</protein>
<name>Y1060_SYNY3</name>
<proteinExistence type="inferred from homology"/>
<sequence>MPSAVGESKNFPNGSPLNKGVRAMKGWVKGAIVLAIALVGLEVIARIYVENLWFQELSFQSVFWKRVRWQGSIALITGFISWGFIVFQVKVTNRLIQEEAQLKGLAVAQAVYAPVPVAIGSRYLPMPAPPVGPKAHSRPLQLPVLLPLIIVLQLILISLVMYYVFITIQVWTPDYTLPNITPAVPQPFRLHFLFTSFSGMGSQLGVTALAGMLALIGVLRGPRLLPGLVFILSAVWGLLLSGNWFRLLLSVNSQPFNTIDPQFHHDISFYIFQIPLWQLLESWWRGLFLFSLLGVTLIILKSADSLSEGRFPGFSAAQLRHISALGAAVALTLGVEHWLKRYDYLFANHGVVYGANYTDIHWRLPVETGLAIFSMAIAIWLGWLSVKGWPRAKGTGAPQRRGQLPIIGLWLPVAVYLLILLLQNLGGWAIELLVVQPNQLTRERPYLARNIAATREAFNLQIIQPATLTGRGQLTPASLERNRLTLNNIRLWDPIPLLKTNRQLQQIRLYYKFSDADLDRYTIRVQKDDTQTISTAKQQTLIAPRELDYTAVPEKAQTWVNKHLVYTHGYGFTLSPVNLVDQGGLPYYFVKDIGTDENAGALRTSSELIRTSIPIGKPRIYFGEITDNYIMTNTAIPELDFPSGEANVYNFYDGRGGIFLNSPIRKLLFAVYLRDWQMLFTENFKPDTRVLFRRNINHRIRHIAPFLRFDRDPYLVTAKVKGEEHSTLYWLIDAYTTSNSYPYSDPGEGDANQPGRNFNYIRNSVKILVDAYNGDVRFFTIDKQDPLINAWQKIFPELFLPFSSMPSTLKSHIRYPVDMFSTQSERLLTYHMEDIDVFYNREDQWRIPQETYADEQQPIAPYYLIMKLAGIDAKEEEFVLSQVYTPNARNNLIALLFARCDEQNYGKLLLYTLPKERLVYGPEQIEALVNQDPVISERISLWNRRGSRAIQGNLLVIPIEESLLYVEPIYLEAEKNSLPTLARVVVVYGNQIAMAESLNEAIEAIFDPNPTGRNAIVRPLDDTVNDLNSELN</sequence>
<organism>
    <name type="scientific">Synechocystis sp. (strain ATCC 27184 / PCC 6803 / Kazusa)</name>
    <dbReference type="NCBI Taxonomy" id="1111708"/>
    <lineage>
        <taxon>Bacteria</taxon>
        <taxon>Bacillati</taxon>
        <taxon>Cyanobacteriota</taxon>
        <taxon>Cyanophyceae</taxon>
        <taxon>Synechococcales</taxon>
        <taxon>Merismopediaceae</taxon>
        <taxon>Synechocystis</taxon>
    </lineage>
</organism>
<keyword id="KW-1003">Cell membrane</keyword>
<keyword id="KW-0472">Membrane</keyword>
<keyword id="KW-1185">Reference proteome</keyword>
<keyword id="KW-0812">Transmembrane</keyword>
<keyword id="KW-1133">Transmembrane helix</keyword>
<feature type="chain" id="PRO_0000157731" description="UPF0182 protein sll1060">
    <location>
        <begin position="1"/>
        <end position="1032"/>
    </location>
</feature>
<feature type="transmembrane region" description="Helical" evidence="1">
    <location>
        <begin position="27"/>
        <end position="49"/>
    </location>
</feature>
<feature type="transmembrane region" description="Helical" evidence="1">
    <location>
        <begin position="69"/>
        <end position="87"/>
    </location>
</feature>
<feature type="transmembrane region" description="Helical" evidence="1">
    <location>
        <begin position="144"/>
        <end position="166"/>
    </location>
</feature>
<feature type="transmembrane region" description="Helical" evidence="1">
    <location>
        <begin position="197"/>
        <end position="219"/>
    </location>
</feature>
<feature type="transmembrane region" description="Helical" evidence="1">
    <location>
        <begin position="226"/>
        <end position="248"/>
    </location>
</feature>
<feature type="transmembrane region" description="Helical" evidence="1">
    <location>
        <begin position="283"/>
        <end position="300"/>
    </location>
</feature>
<feature type="transmembrane region" description="Helical" evidence="1">
    <location>
        <begin position="321"/>
        <end position="339"/>
    </location>
</feature>
<feature type="transmembrane region" description="Helical" evidence="1">
    <location>
        <begin position="364"/>
        <end position="386"/>
    </location>
</feature>
<feature type="transmembrane region" description="Helical" evidence="1">
    <location>
        <begin position="406"/>
        <end position="428"/>
    </location>
</feature>
<evidence type="ECO:0000255" key="1">
    <source>
        <dbReference type="HAMAP-Rule" id="MF_01600"/>
    </source>
</evidence>
<reference key="1">
    <citation type="journal article" date="1996" name="DNA Res.">
        <title>Sequence analysis of the genome of the unicellular cyanobacterium Synechocystis sp. strain PCC6803. II. Sequence determination of the entire genome and assignment of potential protein-coding regions.</title>
        <authorList>
            <person name="Kaneko T."/>
            <person name="Sato S."/>
            <person name="Kotani H."/>
            <person name="Tanaka A."/>
            <person name="Asamizu E."/>
            <person name="Nakamura Y."/>
            <person name="Miyajima N."/>
            <person name="Hirosawa M."/>
            <person name="Sugiura M."/>
            <person name="Sasamoto S."/>
            <person name="Kimura T."/>
            <person name="Hosouchi T."/>
            <person name="Matsuno A."/>
            <person name="Muraki A."/>
            <person name="Nakazaki N."/>
            <person name="Naruo K."/>
            <person name="Okumura S."/>
            <person name="Shimpo S."/>
            <person name="Takeuchi C."/>
            <person name="Wada T."/>
            <person name="Watanabe A."/>
            <person name="Yamada M."/>
            <person name="Yasuda M."/>
            <person name="Tabata S."/>
        </authorList>
    </citation>
    <scope>NUCLEOTIDE SEQUENCE [LARGE SCALE GENOMIC DNA]</scope>
    <source>
        <strain>ATCC 27184 / PCC 6803 / Kazusa</strain>
    </source>
</reference>
<accession>P72637</accession>
<comment type="subcellular location">
    <subcellularLocation>
        <location evidence="1">Cell membrane</location>
        <topology evidence="1">Multi-pass membrane protein</topology>
    </subcellularLocation>
</comment>
<comment type="similarity">
    <text evidence="1">Belongs to the UPF0182 family.</text>
</comment>
<gene>
    <name type="ordered locus">sll1060</name>
</gene>
<dbReference type="EMBL" id="BA000022">
    <property type="protein sequence ID" value="BAA16639.1"/>
    <property type="molecule type" value="Genomic_DNA"/>
</dbReference>
<dbReference type="PIR" id="S74487">
    <property type="entry name" value="S74487"/>
</dbReference>
<dbReference type="IntAct" id="P72637">
    <property type="interactions" value="3"/>
</dbReference>
<dbReference type="STRING" id="1148.gene:10497494"/>
<dbReference type="PaxDb" id="1148-1651711"/>
<dbReference type="EnsemblBacteria" id="BAA16639">
    <property type="protein sequence ID" value="BAA16639"/>
    <property type="gene ID" value="BAA16639"/>
</dbReference>
<dbReference type="KEGG" id="syn:sll1060"/>
<dbReference type="eggNOG" id="COG1615">
    <property type="taxonomic scope" value="Bacteria"/>
</dbReference>
<dbReference type="InParanoid" id="P72637"/>
<dbReference type="PhylomeDB" id="P72637"/>
<dbReference type="Proteomes" id="UP000001425">
    <property type="component" value="Chromosome"/>
</dbReference>
<dbReference type="GO" id="GO:0005886">
    <property type="term" value="C:plasma membrane"/>
    <property type="evidence" value="ECO:0007669"/>
    <property type="project" value="UniProtKB-SubCell"/>
</dbReference>
<dbReference type="HAMAP" id="MF_01600">
    <property type="entry name" value="UPF0182"/>
    <property type="match status" value="1"/>
</dbReference>
<dbReference type="InterPro" id="IPR005372">
    <property type="entry name" value="UPF0182"/>
</dbReference>
<dbReference type="NCBIfam" id="NF002707">
    <property type="entry name" value="PRK02509.1"/>
    <property type="match status" value="1"/>
</dbReference>
<dbReference type="PANTHER" id="PTHR39344">
    <property type="entry name" value="UPF0182 PROTEIN SLL1060"/>
    <property type="match status" value="1"/>
</dbReference>
<dbReference type="PANTHER" id="PTHR39344:SF1">
    <property type="entry name" value="UPF0182 PROTEIN SLL1060"/>
    <property type="match status" value="1"/>
</dbReference>
<dbReference type="Pfam" id="PF03699">
    <property type="entry name" value="UPF0182"/>
    <property type="match status" value="1"/>
</dbReference>